<organism>
    <name type="scientific">Methylobacterium sp. (strain 4-46)</name>
    <dbReference type="NCBI Taxonomy" id="426117"/>
    <lineage>
        <taxon>Bacteria</taxon>
        <taxon>Pseudomonadati</taxon>
        <taxon>Pseudomonadota</taxon>
        <taxon>Alphaproteobacteria</taxon>
        <taxon>Hyphomicrobiales</taxon>
        <taxon>Methylobacteriaceae</taxon>
        <taxon>Methylobacterium</taxon>
    </lineage>
</organism>
<keyword id="KW-0378">Hydrolase</keyword>
<keyword id="KW-0663">Pyridoxal phosphate</keyword>
<proteinExistence type="inferred from homology"/>
<comment type="function">
    <text evidence="1">Catalyzes a cyclopropane ring-opening reaction, the irreversible conversion of 1-aminocyclopropane-1-carboxylate (ACC) to ammonia and alpha-ketobutyrate. Allows growth on ACC as a nitrogen source.</text>
</comment>
<comment type="catalytic activity">
    <reaction evidence="1">
        <text>1-aminocyclopropane-1-carboxylate + H2O = 2-oxobutanoate + NH4(+)</text>
        <dbReference type="Rhea" id="RHEA:16933"/>
        <dbReference type="ChEBI" id="CHEBI:15377"/>
        <dbReference type="ChEBI" id="CHEBI:16763"/>
        <dbReference type="ChEBI" id="CHEBI:28938"/>
        <dbReference type="ChEBI" id="CHEBI:58360"/>
        <dbReference type="EC" id="3.5.99.7"/>
    </reaction>
</comment>
<comment type="cofactor">
    <cofactor evidence="1">
        <name>pyridoxal 5'-phosphate</name>
        <dbReference type="ChEBI" id="CHEBI:597326"/>
    </cofactor>
</comment>
<comment type="subunit">
    <text evidence="1">Homotrimer.</text>
</comment>
<comment type="similarity">
    <text evidence="1">Belongs to the ACC deaminase/D-cysteine desulfhydrase family.</text>
</comment>
<gene>
    <name evidence="1" type="primary">acdS</name>
    <name type="ordered locus">M446_0271</name>
</gene>
<evidence type="ECO:0000255" key="1">
    <source>
        <dbReference type="HAMAP-Rule" id="MF_00807"/>
    </source>
</evidence>
<accession>B0UGM0</accession>
<reference key="1">
    <citation type="submission" date="2008-02" db="EMBL/GenBank/DDBJ databases">
        <title>Complete sequence of chromosome of Methylobacterium sp. 4-46.</title>
        <authorList>
            <consortium name="US DOE Joint Genome Institute"/>
            <person name="Copeland A."/>
            <person name="Lucas S."/>
            <person name="Lapidus A."/>
            <person name="Glavina del Rio T."/>
            <person name="Dalin E."/>
            <person name="Tice H."/>
            <person name="Bruce D."/>
            <person name="Goodwin L."/>
            <person name="Pitluck S."/>
            <person name="Chertkov O."/>
            <person name="Brettin T."/>
            <person name="Detter J.C."/>
            <person name="Han C."/>
            <person name="Kuske C.R."/>
            <person name="Schmutz J."/>
            <person name="Larimer F."/>
            <person name="Land M."/>
            <person name="Hauser L."/>
            <person name="Kyrpides N."/>
            <person name="Ivanova N."/>
            <person name="Marx C.J."/>
            <person name="Richardson P."/>
        </authorList>
    </citation>
    <scope>NUCLEOTIDE SEQUENCE [LARGE SCALE GENOMIC DNA]</scope>
    <source>
        <strain>4-46</strain>
    </source>
</reference>
<feature type="chain" id="PRO_1000134012" description="1-aminocyclopropane-1-carboxylate deaminase">
    <location>
        <begin position="1"/>
        <end position="337"/>
    </location>
</feature>
<feature type="active site" description="Nucleophile" evidence="1">
    <location>
        <position position="77"/>
    </location>
</feature>
<feature type="modified residue" description="N6-(pyridoxal phosphate)lysine" evidence="1">
    <location>
        <position position="50"/>
    </location>
</feature>
<name>1A1D_METS4</name>
<dbReference type="EC" id="3.5.99.7" evidence="1"/>
<dbReference type="EMBL" id="CP000943">
    <property type="protein sequence ID" value="ACA14842.1"/>
    <property type="molecule type" value="Genomic_DNA"/>
</dbReference>
<dbReference type="RefSeq" id="WP_012330260.1">
    <property type="nucleotide sequence ID" value="NC_010511.1"/>
</dbReference>
<dbReference type="SMR" id="B0UGM0"/>
<dbReference type="STRING" id="426117.M446_0271"/>
<dbReference type="KEGG" id="met:M446_0271"/>
<dbReference type="eggNOG" id="COG2515">
    <property type="taxonomic scope" value="Bacteria"/>
</dbReference>
<dbReference type="HOGENOM" id="CLU_048897_2_1_5"/>
<dbReference type="GO" id="GO:0008660">
    <property type="term" value="F:1-aminocyclopropane-1-carboxylate deaminase activity"/>
    <property type="evidence" value="ECO:0007669"/>
    <property type="project" value="UniProtKB-UniRule"/>
</dbReference>
<dbReference type="GO" id="GO:0019148">
    <property type="term" value="F:D-cysteine desulfhydrase activity"/>
    <property type="evidence" value="ECO:0007669"/>
    <property type="project" value="TreeGrafter"/>
</dbReference>
<dbReference type="GO" id="GO:0030170">
    <property type="term" value="F:pyridoxal phosphate binding"/>
    <property type="evidence" value="ECO:0007669"/>
    <property type="project" value="InterPro"/>
</dbReference>
<dbReference type="GO" id="GO:0018871">
    <property type="term" value="P:1-aminocyclopropane-1-carboxylate metabolic process"/>
    <property type="evidence" value="ECO:0007669"/>
    <property type="project" value="UniProtKB-UniRule"/>
</dbReference>
<dbReference type="GO" id="GO:0009310">
    <property type="term" value="P:amine catabolic process"/>
    <property type="evidence" value="ECO:0007669"/>
    <property type="project" value="InterPro"/>
</dbReference>
<dbReference type="CDD" id="cd06449">
    <property type="entry name" value="ACCD"/>
    <property type="match status" value="1"/>
</dbReference>
<dbReference type="FunFam" id="3.40.50.1100:FF:000048">
    <property type="entry name" value="1-aminocyclopropane-1-carboxylate deaminase"/>
    <property type="match status" value="1"/>
</dbReference>
<dbReference type="Gene3D" id="3.40.50.1100">
    <property type="match status" value="2"/>
</dbReference>
<dbReference type="HAMAP" id="MF_00807">
    <property type="entry name" value="ACC_deaminase"/>
    <property type="match status" value="1"/>
</dbReference>
<dbReference type="InterPro" id="IPR027278">
    <property type="entry name" value="ACCD_DCysDesulf"/>
</dbReference>
<dbReference type="InterPro" id="IPR005965">
    <property type="entry name" value="ACP_carboxylate_deaminase"/>
</dbReference>
<dbReference type="InterPro" id="IPR020601">
    <property type="entry name" value="ACP_carboxylate_deaminase_bac"/>
</dbReference>
<dbReference type="InterPro" id="IPR001926">
    <property type="entry name" value="TrpB-like_PALP"/>
</dbReference>
<dbReference type="InterPro" id="IPR036052">
    <property type="entry name" value="TrpB-like_PALP_sf"/>
</dbReference>
<dbReference type="NCBIfam" id="TIGR01274">
    <property type="entry name" value="ACC_deam"/>
    <property type="match status" value="1"/>
</dbReference>
<dbReference type="PANTHER" id="PTHR43780">
    <property type="entry name" value="1-AMINOCYCLOPROPANE-1-CARBOXYLATE DEAMINASE-RELATED"/>
    <property type="match status" value="1"/>
</dbReference>
<dbReference type="PANTHER" id="PTHR43780:SF2">
    <property type="entry name" value="1-AMINOCYCLOPROPANE-1-CARBOXYLATE DEAMINASE-RELATED"/>
    <property type="match status" value="1"/>
</dbReference>
<dbReference type="Pfam" id="PF00291">
    <property type="entry name" value="PALP"/>
    <property type="match status" value="1"/>
</dbReference>
<dbReference type="PIRSF" id="PIRSF006278">
    <property type="entry name" value="ACCD_DCysDesulf"/>
    <property type="match status" value="1"/>
</dbReference>
<dbReference type="SUPFAM" id="SSF53686">
    <property type="entry name" value="Tryptophan synthase beta subunit-like PLP-dependent enzymes"/>
    <property type="match status" value="1"/>
</dbReference>
<protein>
    <recommendedName>
        <fullName evidence="1">1-aminocyclopropane-1-carboxylate deaminase</fullName>
        <shortName evidence="1">ACC deaminase</shortName>
        <shortName evidence="1">ACCD</shortName>
        <ecNumber evidence="1">3.5.99.7</ecNumber>
    </recommendedName>
</protein>
<sequence length="337" mass="36310">MLARFERYPLTFGPTPIERLSRLSAHLGGKVDLYAKREDCNSGLAFGGNKLRKLEYIVPDAIASGADTLVSIGGVQSNHTRMVAAVAAKIGMKCRLVQEAWVPHEDAVYDRVGNIMLSRIMGADVRLVEDGFDIGIRSSWEQAIAEVKAAGGKPYAIPAGASVHKYGGLGYVGFAEEVRAQERELGFAFDYIVVCTVTGSTHAGMLVGFAKDGRERRVIGIDASATPAQTRAQVLEIARRTADLVDLGRELSADDVVLNEDYAYPIYGVPSAETKEAIRLCGRLEGMITDPVYEGKSMQGMIDLVRKGFFPAGAKVLYAHLGGAPALNGYAYAFRNG</sequence>